<name>RSMA_BURCH</name>
<protein>
    <recommendedName>
        <fullName evidence="1">Ribosomal RNA small subunit methyltransferase A</fullName>
        <ecNumber evidence="1">2.1.1.182</ecNumber>
    </recommendedName>
    <alternativeName>
        <fullName evidence="1">16S rRNA (adenine(1518)-N(6)/adenine(1519)-N(6))-dimethyltransferase</fullName>
    </alternativeName>
    <alternativeName>
        <fullName evidence="1">16S rRNA dimethyladenosine transferase</fullName>
    </alternativeName>
    <alternativeName>
        <fullName evidence="1">16S rRNA dimethylase</fullName>
    </alternativeName>
    <alternativeName>
        <fullName evidence="1">S-adenosylmethionine-6-N', N'-adenosyl(rRNA) dimethyltransferase</fullName>
    </alternativeName>
</protein>
<reference key="1">
    <citation type="submission" date="2006-08" db="EMBL/GenBank/DDBJ databases">
        <title>Complete sequence of chromosome 1 of Burkholderia cenocepacia HI2424.</title>
        <authorList>
            <person name="Copeland A."/>
            <person name="Lucas S."/>
            <person name="Lapidus A."/>
            <person name="Barry K."/>
            <person name="Detter J.C."/>
            <person name="Glavina del Rio T."/>
            <person name="Hammon N."/>
            <person name="Israni S."/>
            <person name="Pitluck S."/>
            <person name="Chain P."/>
            <person name="Malfatti S."/>
            <person name="Shin M."/>
            <person name="Vergez L."/>
            <person name="Schmutz J."/>
            <person name="Larimer F."/>
            <person name="Land M."/>
            <person name="Hauser L."/>
            <person name="Kyrpides N."/>
            <person name="Kim E."/>
            <person name="LiPuma J.J."/>
            <person name="Gonzalez C.F."/>
            <person name="Konstantinidis K."/>
            <person name="Tiedje J.M."/>
            <person name="Richardson P."/>
        </authorList>
    </citation>
    <scope>NUCLEOTIDE SEQUENCE [LARGE SCALE GENOMIC DNA]</scope>
    <source>
        <strain>HI2424</strain>
    </source>
</reference>
<gene>
    <name evidence="1" type="primary">rsmA</name>
    <name evidence="1" type="synonym">ksgA</name>
    <name type="ordered locus">Bcen2424_2708</name>
</gene>
<comment type="function">
    <text evidence="1">Specifically dimethylates two adjacent adenosines (A1518 and A1519) in the loop of a conserved hairpin near the 3'-end of 16S rRNA in the 30S particle. May play a critical role in biogenesis of 30S subunits.</text>
</comment>
<comment type="catalytic activity">
    <reaction evidence="1">
        <text>adenosine(1518)/adenosine(1519) in 16S rRNA + 4 S-adenosyl-L-methionine = N(6)-dimethyladenosine(1518)/N(6)-dimethyladenosine(1519) in 16S rRNA + 4 S-adenosyl-L-homocysteine + 4 H(+)</text>
        <dbReference type="Rhea" id="RHEA:19609"/>
        <dbReference type="Rhea" id="RHEA-COMP:10232"/>
        <dbReference type="Rhea" id="RHEA-COMP:10233"/>
        <dbReference type="ChEBI" id="CHEBI:15378"/>
        <dbReference type="ChEBI" id="CHEBI:57856"/>
        <dbReference type="ChEBI" id="CHEBI:59789"/>
        <dbReference type="ChEBI" id="CHEBI:74411"/>
        <dbReference type="ChEBI" id="CHEBI:74493"/>
        <dbReference type="EC" id="2.1.1.182"/>
    </reaction>
</comment>
<comment type="subcellular location">
    <subcellularLocation>
        <location evidence="1">Cytoplasm</location>
    </subcellularLocation>
</comment>
<comment type="similarity">
    <text evidence="1">Belongs to the class I-like SAM-binding methyltransferase superfamily. rRNA adenine N(6)-methyltransferase family. RsmA subfamily.</text>
</comment>
<dbReference type="EC" id="2.1.1.182" evidence="1"/>
<dbReference type="EMBL" id="CP000458">
    <property type="protein sequence ID" value="ABK09458.1"/>
    <property type="molecule type" value="Genomic_DNA"/>
</dbReference>
<dbReference type="RefSeq" id="WP_011546170.1">
    <property type="nucleotide sequence ID" value="NC_008542.1"/>
</dbReference>
<dbReference type="SMR" id="A0KAD1"/>
<dbReference type="GeneID" id="83049520"/>
<dbReference type="KEGG" id="bch:Bcen2424_2708"/>
<dbReference type="HOGENOM" id="CLU_041220_0_1_4"/>
<dbReference type="GO" id="GO:0005829">
    <property type="term" value="C:cytosol"/>
    <property type="evidence" value="ECO:0007669"/>
    <property type="project" value="TreeGrafter"/>
</dbReference>
<dbReference type="GO" id="GO:0052908">
    <property type="term" value="F:16S rRNA (adenine(1518)-N(6)/adenine(1519)-N(6))-dimethyltransferase activity"/>
    <property type="evidence" value="ECO:0007669"/>
    <property type="project" value="UniProtKB-EC"/>
</dbReference>
<dbReference type="GO" id="GO:0003723">
    <property type="term" value="F:RNA binding"/>
    <property type="evidence" value="ECO:0007669"/>
    <property type="project" value="UniProtKB-KW"/>
</dbReference>
<dbReference type="FunFam" id="1.10.8.100:FF:000001">
    <property type="entry name" value="Ribosomal RNA small subunit methyltransferase A"/>
    <property type="match status" value="1"/>
</dbReference>
<dbReference type="Gene3D" id="1.10.8.100">
    <property type="entry name" value="Ribosomal RNA adenine dimethylase-like, domain 2"/>
    <property type="match status" value="1"/>
</dbReference>
<dbReference type="Gene3D" id="3.40.50.150">
    <property type="entry name" value="Vaccinia Virus protein VP39"/>
    <property type="match status" value="1"/>
</dbReference>
<dbReference type="HAMAP" id="MF_00607">
    <property type="entry name" value="16SrRNA_methyltr_A"/>
    <property type="match status" value="1"/>
</dbReference>
<dbReference type="InterPro" id="IPR001737">
    <property type="entry name" value="KsgA/Erm"/>
</dbReference>
<dbReference type="InterPro" id="IPR023165">
    <property type="entry name" value="rRNA_Ade_diMease-like_C"/>
</dbReference>
<dbReference type="InterPro" id="IPR020598">
    <property type="entry name" value="rRNA_Ade_methylase_Trfase_N"/>
</dbReference>
<dbReference type="InterPro" id="IPR011530">
    <property type="entry name" value="rRNA_adenine_dimethylase"/>
</dbReference>
<dbReference type="InterPro" id="IPR029063">
    <property type="entry name" value="SAM-dependent_MTases_sf"/>
</dbReference>
<dbReference type="NCBIfam" id="TIGR00755">
    <property type="entry name" value="ksgA"/>
    <property type="match status" value="1"/>
</dbReference>
<dbReference type="PANTHER" id="PTHR11727">
    <property type="entry name" value="DIMETHYLADENOSINE TRANSFERASE"/>
    <property type="match status" value="1"/>
</dbReference>
<dbReference type="PANTHER" id="PTHR11727:SF7">
    <property type="entry name" value="DIMETHYLADENOSINE TRANSFERASE-RELATED"/>
    <property type="match status" value="1"/>
</dbReference>
<dbReference type="Pfam" id="PF00398">
    <property type="entry name" value="RrnaAD"/>
    <property type="match status" value="1"/>
</dbReference>
<dbReference type="SMART" id="SM00650">
    <property type="entry name" value="rADc"/>
    <property type="match status" value="1"/>
</dbReference>
<dbReference type="SUPFAM" id="SSF53335">
    <property type="entry name" value="S-adenosyl-L-methionine-dependent methyltransferases"/>
    <property type="match status" value="1"/>
</dbReference>
<dbReference type="PROSITE" id="PS51689">
    <property type="entry name" value="SAM_RNA_A_N6_MT"/>
    <property type="match status" value="1"/>
</dbReference>
<organism>
    <name type="scientific">Burkholderia cenocepacia (strain HI2424)</name>
    <dbReference type="NCBI Taxonomy" id="331272"/>
    <lineage>
        <taxon>Bacteria</taxon>
        <taxon>Pseudomonadati</taxon>
        <taxon>Pseudomonadota</taxon>
        <taxon>Betaproteobacteria</taxon>
        <taxon>Burkholderiales</taxon>
        <taxon>Burkholderiaceae</taxon>
        <taxon>Burkholderia</taxon>
        <taxon>Burkholderia cepacia complex</taxon>
    </lineage>
</organism>
<evidence type="ECO:0000255" key="1">
    <source>
        <dbReference type="HAMAP-Rule" id="MF_00607"/>
    </source>
</evidence>
<sequence length="275" mass="30437">MSNSRQHQGHFARKRFGQNFLVDHGVIDSIVATIGPARGQRMVEIGPGLGALTGPLIERLATPESPLHAVELDRDLIGRLQQRFGALLELHAGDALAFDFRSLAAPGDKPSLRIVGNLPYNISSPLLFHLMTFADAVIDQHFMLQNEVVERMVAEPGTKAFSRLSVMLQYRYVMEKMLDVPPESFQPPPKVDSAIVRMIPYEPHELPDVDPVLLGEIVTAAFSQRRKMLRNTLGDYRETIDFDALGFDLARRAEDVSVAEYVGVAQALAALRKAG</sequence>
<accession>A0KAD1</accession>
<keyword id="KW-0963">Cytoplasm</keyword>
<keyword id="KW-0489">Methyltransferase</keyword>
<keyword id="KW-0694">RNA-binding</keyword>
<keyword id="KW-0698">rRNA processing</keyword>
<keyword id="KW-0949">S-adenosyl-L-methionine</keyword>
<keyword id="KW-0808">Transferase</keyword>
<feature type="chain" id="PRO_1000056602" description="Ribosomal RNA small subunit methyltransferase A">
    <location>
        <begin position="1"/>
        <end position="275"/>
    </location>
</feature>
<feature type="binding site" evidence="1">
    <location>
        <position position="19"/>
    </location>
    <ligand>
        <name>S-adenosyl-L-methionine</name>
        <dbReference type="ChEBI" id="CHEBI:59789"/>
    </ligand>
</feature>
<feature type="binding site" evidence="1">
    <location>
        <position position="21"/>
    </location>
    <ligand>
        <name>S-adenosyl-L-methionine</name>
        <dbReference type="ChEBI" id="CHEBI:59789"/>
    </ligand>
</feature>
<feature type="binding site" evidence="1">
    <location>
        <position position="46"/>
    </location>
    <ligand>
        <name>S-adenosyl-L-methionine</name>
        <dbReference type="ChEBI" id="CHEBI:59789"/>
    </ligand>
</feature>
<feature type="binding site" evidence="1">
    <location>
        <position position="71"/>
    </location>
    <ligand>
        <name>S-adenosyl-L-methionine</name>
        <dbReference type="ChEBI" id="CHEBI:59789"/>
    </ligand>
</feature>
<feature type="binding site" evidence="1">
    <location>
        <position position="94"/>
    </location>
    <ligand>
        <name>S-adenosyl-L-methionine</name>
        <dbReference type="ChEBI" id="CHEBI:59789"/>
    </ligand>
</feature>
<feature type="binding site" evidence="1">
    <location>
        <position position="117"/>
    </location>
    <ligand>
        <name>S-adenosyl-L-methionine</name>
        <dbReference type="ChEBI" id="CHEBI:59789"/>
    </ligand>
</feature>
<proteinExistence type="inferred from homology"/>